<accession>A1WY97</accession>
<organism>
    <name type="scientific">Halorhodospira halophila (strain DSM 244 / SL1)</name>
    <name type="common">Ectothiorhodospira halophila (strain DSM 244 / SL1)</name>
    <dbReference type="NCBI Taxonomy" id="349124"/>
    <lineage>
        <taxon>Bacteria</taxon>
        <taxon>Pseudomonadati</taxon>
        <taxon>Pseudomonadota</taxon>
        <taxon>Gammaproteobacteria</taxon>
        <taxon>Chromatiales</taxon>
        <taxon>Ectothiorhodospiraceae</taxon>
        <taxon>Halorhodospira</taxon>
    </lineage>
</organism>
<proteinExistence type="inferred from homology"/>
<protein>
    <recommendedName>
        <fullName evidence="1">Acetyl-coenzyme A synthetase</fullName>
        <shortName evidence="1">AcCoA synthetase</shortName>
        <shortName evidence="1">Acs</shortName>
        <ecNumber evidence="1">6.2.1.1</ecNumber>
    </recommendedName>
    <alternativeName>
        <fullName evidence="1">Acetate--CoA ligase</fullName>
    </alternativeName>
    <alternativeName>
        <fullName evidence="1">Acyl-activating enzyme</fullName>
    </alternativeName>
</protein>
<gene>
    <name evidence="1" type="primary">acsA</name>
    <name type="ordered locus">Hhal_1895</name>
</gene>
<name>ACSA_HALHL</name>
<evidence type="ECO:0000255" key="1">
    <source>
        <dbReference type="HAMAP-Rule" id="MF_01123"/>
    </source>
</evidence>
<dbReference type="EC" id="6.2.1.1" evidence="1"/>
<dbReference type="EMBL" id="CP000544">
    <property type="protein sequence ID" value="ABM62659.1"/>
    <property type="molecule type" value="Genomic_DNA"/>
</dbReference>
<dbReference type="RefSeq" id="WP_011814681.1">
    <property type="nucleotide sequence ID" value="NC_008789.1"/>
</dbReference>
<dbReference type="SMR" id="A1WY97"/>
<dbReference type="STRING" id="349124.Hhal_1895"/>
<dbReference type="KEGG" id="hha:Hhal_1895"/>
<dbReference type="eggNOG" id="COG0365">
    <property type="taxonomic scope" value="Bacteria"/>
</dbReference>
<dbReference type="HOGENOM" id="CLU_000022_3_6_6"/>
<dbReference type="OrthoDB" id="9803968at2"/>
<dbReference type="Proteomes" id="UP000000647">
    <property type="component" value="Chromosome"/>
</dbReference>
<dbReference type="GO" id="GO:0005829">
    <property type="term" value="C:cytosol"/>
    <property type="evidence" value="ECO:0007669"/>
    <property type="project" value="TreeGrafter"/>
</dbReference>
<dbReference type="GO" id="GO:0003987">
    <property type="term" value="F:acetate-CoA ligase activity"/>
    <property type="evidence" value="ECO:0007669"/>
    <property type="project" value="UniProtKB-UniRule"/>
</dbReference>
<dbReference type="GO" id="GO:0016208">
    <property type="term" value="F:AMP binding"/>
    <property type="evidence" value="ECO:0007669"/>
    <property type="project" value="InterPro"/>
</dbReference>
<dbReference type="GO" id="GO:0005524">
    <property type="term" value="F:ATP binding"/>
    <property type="evidence" value="ECO:0007669"/>
    <property type="project" value="UniProtKB-KW"/>
</dbReference>
<dbReference type="GO" id="GO:0046872">
    <property type="term" value="F:metal ion binding"/>
    <property type="evidence" value="ECO:0007669"/>
    <property type="project" value="UniProtKB-KW"/>
</dbReference>
<dbReference type="GO" id="GO:0019427">
    <property type="term" value="P:acetyl-CoA biosynthetic process from acetate"/>
    <property type="evidence" value="ECO:0007669"/>
    <property type="project" value="InterPro"/>
</dbReference>
<dbReference type="CDD" id="cd05966">
    <property type="entry name" value="ACS"/>
    <property type="match status" value="1"/>
</dbReference>
<dbReference type="FunFam" id="3.30.300.30:FF:000004">
    <property type="entry name" value="Acetyl-coenzyme A synthetase"/>
    <property type="match status" value="1"/>
</dbReference>
<dbReference type="FunFam" id="3.40.50.12780:FF:000001">
    <property type="entry name" value="Acetyl-coenzyme A synthetase"/>
    <property type="match status" value="1"/>
</dbReference>
<dbReference type="Gene3D" id="3.30.300.30">
    <property type="match status" value="1"/>
</dbReference>
<dbReference type="Gene3D" id="3.40.50.12780">
    <property type="entry name" value="N-terminal domain of ligase-like"/>
    <property type="match status" value="1"/>
</dbReference>
<dbReference type="HAMAP" id="MF_01123">
    <property type="entry name" value="Ac_CoA_synth"/>
    <property type="match status" value="1"/>
</dbReference>
<dbReference type="InterPro" id="IPR011904">
    <property type="entry name" value="Ac_CoA_lig"/>
</dbReference>
<dbReference type="InterPro" id="IPR032387">
    <property type="entry name" value="ACAS_N"/>
</dbReference>
<dbReference type="InterPro" id="IPR025110">
    <property type="entry name" value="AMP-bd_C"/>
</dbReference>
<dbReference type="InterPro" id="IPR045851">
    <property type="entry name" value="AMP-bd_C_sf"/>
</dbReference>
<dbReference type="InterPro" id="IPR020845">
    <property type="entry name" value="AMP-binding_CS"/>
</dbReference>
<dbReference type="InterPro" id="IPR000873">
    <property type="entry name" value="AMP-dep_synth/lig_dom"/>
</dbReference>
<dbReference type="InterPro" id="IPR042099">
    <property type="entry name" value="ANL_N_sf"/>
</dbReference>
<dbReference type="NCBIfam" id="TIGR02188">
    <property type="entry name" value="Ac_CoA_lig_AcsA"/>
    <property type="match status" value="1"/>
</dbReference>
<dbReference type="NCBIfam" id="NF001208">
    <property type="entry name" value="PRK00174.1"/>
    <property type="match status" value="1"/>
</dbReference>
<dbReference type="PANTHER" id="PTHR24095">
    <property type="entry name" value="ACETYL-COENZYME A SYNTHETASE"/>
    <property type="match status" value="1"/>
</dbReference>
<dbReference type="PANTHER" id="PTHR24095:SF14">
    <property type="entry name" value="ACETYL-COENZYME A SYNTHETASE 1"/>
    <property type="match status" value="1"/>
</dbReference>
<dbReference type="Pfam" id="PF16177">
    <property type="entry name" value="ACAS_N"/>
    <property type="match status" value="1"/>
</dbReference>
<dbReference type="Pfam" id="PF00501">
    <property type="entry name" value="AMP-binding"/>
    <property type="match status" value="1"/>
</dbReference>
<dbReference type="Pfam" id="PF13193">
    <property type="entry name" value="AMP-binding_C"/>
    <property type="match status" value="1"/>
</dbReference>
<dbReference type="SUPFAM" id="SSF56801">
    <property type="entry name" value="Acetyl-CoA synthetase-like"/>
    <property type="match status" value="1"/>
</dbReference>
<dbReference type="PROSITE" id="PS00455">
    <property type="entry name" value="AMP_BINDING"/>
    <property type="match status" value="1"/>
</dbReference>
<sequence length="645" mass="71771">MSETKVYPVPETIQRDAHLNFEQYQEMYNRSIQDPEGFWSEQADKFLDWFSKWGTTCHWDLAKGDIRFFEGGTLNVAYNCVDRHLETRGDQTAIIWEGDEPDQDEHITYRDLYERVGRLANALKARGVKKGDRVCIYLPMVPEAAVAMLACARIGAVHSIVFGGFSPEALRDRIQDADAEVVITSDEGVRGGRSIPLKANTDKALEGCPNVKTVFVVRRTGGDIAWNDGRDVWFHEACAEASPDCPPEHMDAEDPLFILYTSGSTGKPKGVQHSTAGYLLGTAMTHKYIFDYQDGEVYWCTADVGWVTGHSYIVYGPLANGAKTLMFEGVPTYPDAGRFWQVVDKHEVSIFYTAPTAIRALMGQGDDHVKKTSRKSLRILGTVGEPINPEAWEWYYHTIGEDRCPIVDTWWQTETGSILIAPLPGAMDLKPGSATLPFFGVEPQLVDDKGNVLEGATNGNLVINRAWPSMMRTIYGDHERFFNTYLAAYPGKYFTGDGARRDEDGYYWITGRVDDVINVSGHRMGTAEVESALVLHDKVSEAAVVGYPHDVKGQGIYAYVTLMAGEEPSDELKQELVKLCIQEIGPIAKPDIIQFAPGLPKTRSGKIMRRILRKVASNELDSLGDTSTLADPTVVDTLIEDRANQ</sequence>
<comment type="function">
    <text evidence="1">Catalyzes the conversion of acetate into acetyl-CoA (AcCoA), an essential intermediate at the junction of anabolic and catabolic pathways. AcsA undergoes a two-step reaction. In the first half reaction, AcsA combines acetate with ATP to form acetyl-adenylate (AcAMP) intermediate. In the second half reaction, it can then transfer the acetyl group from AcAMP to the sulfhydryl group of CoA, forming the product AcCoA.</text>
</comment>
<comment type="catalytic activity">
    <reaction evidence="1">
        <text>acetate + ATP + CoA = acetyl-CoA + AMP + diphosphate</text>
        <dbReference type="Rhea" id="RHEA:23176"/>
        <dbReference type="ChEBI" id="CHEBI:30089"/>
        <dbReference type="ChEBI" id="CHEBI:30616"/>
        <dbReference type="ChEBI" id="CHEBI:33019"/>
        <dbReference type="ChEBI" id="CHEBI:57287"/>
        <dbReference type="ChEBI" id="CHEBI:57288"/>
        <dbReference type="ChEBI" id="CHEBI:456215"/>
        <dbReference type="EC" id="6.2.1.1"/>
    </reaction>
</comment>
<comment type="cofactor">
    <cofactor evidence="1">
        <name>Mg(2+)</name>
        <dbReference type="ChEBI" id="CHEBI:18420"/>
    </cofactor>
</comment>
<comment type="PTM">
    <text evidence="1">Acetylated. Deacetylation by the SIR2-homolog deacetylase activates the enzyme.</text>
</comment>
<comment type="similarity">
    <text evidence="1">Belongs to the ATP-dependent AMP-binding enzyme family.</text>
</comment>
<reference key="1">
    <citation type="submission" date="2006-12" db="EMBL/GenBank/DDBJ databases">
        <title>Complete sequence of Halorhodospira halophila SL1.</title>
        <authorList>
            <consortium name="US DOE Joint Genome Institute"/>
            <person name="Copeland A."/>
            <person name="Lucas S."/>
            <person name="Lapidus A."/>
            <person name="Barry K."/>
            <person name="Detter J.C."/>
            <person name="Glavina del Rio T."/>
            <person name="Hammon N."/>
            <person name="Israni S."/>
            <person name="Dalin E."/>
            <person name="Tice H."/>
            <person name="Pitluck S."/>
            <person name="Saunders E."/>
            <person name="Brettin T."/>
            <person name="Bruce D."/>
            <person name="Han C."/>
            <person name="Tapia R."/>
            <person name="Schmutz J."/>
            <person name="Larimer F."/>
            <person name="Land M."/>
            <person name="Hauser L."/>
            <person name="Kyrpides N."/>
            <person name="Mikhailova N."/>
            <person name="Hoff W."/>
            <person name="Richardson P."/>
        </authorList>
    </citation>
    <scope>NUCLEOTIDE SEQUENCE [LARGE SCALE GENOMIC DNA]</scope>
    <source>
        <strain>DSM 244 / SL1</strain>
    </source>
</reference>
<feature type="chain" id="PRO_1000065291" description="Acetyl-coenzyme A synthetase">
    <location>
        <begin position="1"/>
        <end position="645"/>
    </location>
</feature>
<feature type="binding site" evidence="1">
    <location>
        <begin position="190"/>
        <end position="193"/>
    </location>
    <ligand>
        <name>CoA</name>
        <dbReference type="ChEBI" id="CHEBI:57287"/>
    </ligand>
</feature>
<feature type="binding site" evidence="1">
    <location>
        <position position="308"/>
    </location>
    <ligand>
        <name>CoA</name>
        <dbReference type="ChEBI" id="CHEBI:57287"/>
    </ligand>
</feature>
<feature type="binding site" evidence="1">
    <location>
        <begin position="384"/>
        <end position="386"/>
    </location>
    <ligand>
        <name>ATP</name>
        <dbReference type="ChEBI" id="CHEBI:30616"/>
    </ligand>
</feature>
<feature type="binding site" evidence="1">
    <location>
        <begin position="408"/>
        <end position="413"/>
    </location>
    <ligand>
        <name>ATP</name>
        <dbReference type="ChEBI" id="CHEBI:30616"/>
    </ligand>
</feature>
<feature type="binding site" evidence="1">
    <location>
        <position position="497"/>
    </location>
    <ligand>
        <name>ATP</name>
        <dbReference type="ChEBI" id="CHEBI:30616"/>
    </ligand>
</feature>
<feature type="binding site" evidence="1">
    <location>
        <position position="512"/>
    </location>
    <ligand>
        <name>ATP</name>
        <dbReference type="ChEBI" id="CHEBI:30616"/>
    </ligand>
</feature>
<feature type="binding site" evidence="1">
    <location>
        <position position="520"/>
    </location>
    <ligand>
        <name>CoA</name>
        <dbReference type="ChEBI" id="CHEBI:57287"/>
    </ligand>
</feature>
<feature type="binding site" evidence="1">
    <location>
        <position position="523"/>
    </location>
    <ligand>
        <name>ATP</name>
        <dbReference type="ChEBI" id="CHEBI:30616"/>
    </ligand>
</feature>
<feature type="binding site" evidence="1">
    <location>
        <position position="534"/>
    </location>
    <ligand>
        <name>Mg(2+)</name>
        <dbReference type="ChEBI" id="CHEBI:18420"/>
    </ligand>
</feature>
<feature type="binding site" evidence="1">
    <location>
        <position position="536"/>
    </location>
    <ligand>
        <name>Mg(2+)</name>
        <dbReference type="ChEBI" id="CHEBI:18420"/>
    </ligand>
</feature>
<feature type="binding site" evidence="1">
    <location>
        <position position="539"/>
    </location>
    <ligand>
        <name>Mg(2+)</name>
        <dbReference type="ChEBI" id="CHEBI:18420"/>
    </ligand>
</feature>
<feature type="modified residue" description="N6-acetyllysine" evidence="1">
    <location>
        <position position="606"/>
    </location>
</feature>
<keyword id="KW-0007">Acetylation</keyword>
<keyword id="KW-0067">ATP-binding</keyword>
<keyword id="KW-0436">Ligase</keyword>
<keyword id="KW-0460">Magnesium</keyword>
<keyword id="KW-0479">Metal-binding</keyword>
<keyword id="KW-0547">Nucleotide-binding</keyword>
<keyword id="KW-1185">Reference proteome</keyword>